<keyword id="KW-0031">Aminopeptidase</keyword>
<keyword id="KW-1015">Disulfide bond</keyword>
<keyword id="KW-0325">Glycoprotein</keyword>
<keyword id="KW-0378">Hydrolase</keyword>
<keyword id="KW-0479">Metal-binding</keyword>
<keyword id="KW-0645">Protease</keyword>
<keyword id="KW-1185">Reference proteome</keyword>
<keyword id="KW-0964">Secreted</keyword>
<keyword id="KW-0732">Signal</keyword>
<keyword id="KW-0843">Virulence</keyword>
<keyword id="KW-0862">Zinc</keyword>
<keyword id="KW-0865">Zymogen</keyword>
<gene>
    <name type="primary">lap1</name>
    <name type="ORF">AFUA_4G04210</name>
</gene>
<protein>
    <recommendedName>
        <fullName>Leucine aminopeptidase 1</fullName>
        <ecNumber>3.4.11.-</ecNumber>
    </recommendedName>
    <alternativeName>
        <fullName>Leucyl aminopeptidase 1</fullName>
        <shortName>LAP1</shortName>
    </alternativeName>
</protein>
<feature type="signal peptide" evidence="2">
    <location>
        <begin position="1"/>
        <end position="19"/>
    </location>
</feature>
<feature type="propeptide" id="PRO_0000412425" evidence="1">
    <location>
        <begin position="20"/>
        <end position="88"/>
    </location>
</feature>
<feature type="chain" id="PRO_0000412426" description="Leucine aminopeptidase 1">
    <location>
        <begin position="89"/>
        <end position="388"/>
    </location>
</feature>
<feature type="binding site" evidence="1">
    <location>
        <position position="188"/>
    </location>
    <ligand>
        <name>Zn(2+)</name>
        <dbReference type="ChEBI" id="CHEBI:29105"/>
        <label>1</label>
    </ligand>
</feature>
<feature type="binding site" evidence="1">
    <location>
        <position position="207"/>
    </location>
    <ligand>
        <name>Zn(2+)</name>
        <dbReference type="ChEBI" id="CHEBI:29105"/>
        <label>1</label>
    </ligand>
</feature>
<feature type="binding site" evidence="1">
    <location>
        <position position="207"/>
    </location>
    <ligand>
        <name>Zn(2+)</name>
        <dbReference type="ChEBI" id="CHEBI:29105"/>
        <label>2</label>
        <note>catalytic</note>
    </ligand>
</feature>
<feature type="binding site" evidence="1">
    <location>
        <position position="246"/>
    </location>
    <ligand>
        <name>Zn(2+)</name>
        <dbReference type="ChEBI" id="CHEBI:29105"/>
        <label>2</label>
        <note>catalytic</note>
    </ligand>
</feature>
<feature type="binding site" evidence="1">
    <location>
        <position position="273"/>
    </location>
    <ligand>
        <name>Zn(2+)</name>
        <dbReference type="ChEBI" id="CHEBI:29105"/>
        <label>1</label>
    </ligand>
</feature>
<feature type="binding site" evidence="1">
    <location>
        <position position="355"/>
    </location>
    <ligand>
        <name>Zn(2+)</name>
        <dbReference type="ChEBI" id="CHEBI:29105"/>
        <label>2</label>
        <note>catalytic</note>
    </ligand>
</feature>
<feature type="glycosylation site" description="N-linked (GlcNAc...) asparagine" evidence="2">
    <location>
        <position position="106"/>
    </location>
</feature>
<feature type="glycosylation site" description="N-linked (GlcNAc...) asparagine" evidence="2">
    <location>
        <position position="180"/>
    </location>
</feature>
<feature type="glycosylation site" description="N-linked (GlcNAc...) asparagine" evidence="2">
    <location>
        <position position="232"/>
    </location>
</feature>
<feature type="disulfide bond" evidence="1">
    <location>
        <begin position="322"/>
        <end position="326"/>
    </location>
</feature>
<evidence type="ECO:0000250" key="1"/>
<evidence type="ECO:0000255" key="2"/>
<evidence type="ECO:0000305" key="3"/>
<name>LAP1_ASPFU</name>
<accession>Q4W9P4</accession>
<sequence length="388" mass="43128">MKVLTAIALSAIAFTGAVAAVITQEAFLNNPRIHHDQEKYLIELAPYRTRWVTEEEKWALKLDGVNFIDITEEHNTGFYPTLHSASYVKYPPKMQYAEEVAALNKNLSKENMKANLERFTSFHTRYYKSQTGIRSATWLFDQVQRVVSESGAAEYGATVERFSHPWGQFSIIARIPGRTNKTVVLGAHQDSINLFLPSILAAPGADDDGSGTVTILEALRGLLQSDAIAKGNASNTVEFHWYSAEEGGMLGSQAIFSNYKRNRREIKAMLQQDMTGYVQGALNAGVEEAIGIMVDYVDQGLTQFLKDVVTAYCSVGYLETKCGYACSDHTSASKYGYPAAMATEAEMENTNKKIHTTDDKIKYLSFDHMLEHAKLSLGFAFELAFAPF</sequence>
<proteinExistence type="inferred from homology"/>
<reference key="1">
    <citation type="journal article" date="2005" name="Nature">
        <title>Genomic sequence of the pathogenic and allergenic filamentous fungus Aspergillus fumigatus.</title>
        <authorList>
            <person name="Nierman W.C."/>
            <person name="Pain A."/>
            <person name="Anderson M.J."/>
            <person name="Wortman J.R."/>
            <person name="Kim H.S."/>
            <person name="Arroyo J."/>
            <person name="Berriman M."/>
            <person name="Abe K."/>
            <person name="Archer D.B."/>
            <person name="Bermejo C."/>
            <person name="Bennett J.W."/>
            <person name="Bowyer P."/>
            <person name="Chen D."/>
            <person name="Collins M."/>
            <person name="Coulsen R."/>
            <person name="Davies R."/>
            <person name="Dyer P.S."/>
            <person name="Farman M.L."/>
            <person name="Fedorova N."/>
            <person name="Fedorova N.D."/>
            <person name="Feldblyum T.V."/>
            <person name="Fischer R."/>
            <person name="Fosker N."/>
            <person name="Fraser A."/>
            <person name="Garcia J.L."/>
            <person name="Garcia M.J."/>
            <person name="Goble A."/>
            <person name="Goldman G.H."/>
            <person name="Gomi K."/>
            <person name="Griffith-Jones S."/>
            <person name="Gwilliam R."/>
            <person name="Haas B.J."/>
            <person name="Haas H."/>
            <person name="Harris D.E."/>
            <person name="Horiuchi H."/>
            <person name="Huang J."/>
            <person name="Humphray S."/>
            <person name="Jimenez J."/>
            <person name="Keller N."/>
            <person name="Khouri H."/>
            <person name="Kitamoto K."/>
            <person name="Kobayashi T."/>
            <person name="Konzack S."/>
            <person name="Kulkarni R."/>
            <person name="Kumagai T."/>
            <person name="Lafton A."/>
            <person name="Latge J.-P."/>
            <person name="Li W."/>
            <person name="Lord A."/>
            <person name="Lu C."/>
            <person name="Majoros W.H."/>
            <person name="May G.S."/>
            <person name="Miller B.L."/>
            <person name="Mohamoud Y."/>
            <person name="Molina M."/>
            <person name="Monod M."/>
            <person name="Mouyna I."/>
            <person name="Mulligan S."/>
            <person name="Murphy L.D."/>
            <person name="O'Neil S."/>
            <person name="Paulsen I."/>
            <person name="Penalva M.A."/>
            <person name="Pertea M."/>
            <person name="Price C."/>
            <person name="Pritchard B.L."/>
            <person name="Quail M.A."/>
            <person name="Rabbinowitsch E."/>
            <person name="Rawlins N."/>
            <person name="Rajandream M.A."/>
            <person name="Reichard U."/>
            <person name="Renauld H."/>
            <person name="Robson G.D."/>
            <person name="Rodriguez de Cordoba S."/>
            <person name="Rodriguez-Pena J.M."/>
            <person name="Ronning C.M."/>
            <person name="Rutter S."/>
            <person name="Salzberg S.L."/>
            <person name="Sanchez M."/>
            <person name="Sanchez-Ferrero J.C."/>
            <person name="Saunders D."/>
            <person name="Seeger K."/>
            <person name="Squares R."/>
            <person name="Squares S."/>
            <person name="Takeuchi M."/>
            <person name="Tekaia F."/>
            <person name="Turner G."/>
            <person name="Vazquez de Aldana C.R."/>
            <person name="Weidman J."/>
            <person name="White O."/>
            <person name="Woodward J.R."/>
            <person name="Yu J.-H."/>
            <person name="Fraser C.M."/>
            <person name="Galagan J.E."/>
            <person name="Asai K."/>
            <person name="Machida M."/>
            <person name="Hall N."/>
            <person name="Barrell B.G."/>
            <person name="Denning D.W."/>
        </authorList>
    </citation>
    <scope>NUCLEOTIDE SEQUENCE [LARGE SCALE GENOMIC DNA]</scope>
    <source>
        <strain>ATCC MYA-4609 / CBS 101355 / FGSC A1100 / Af293</strain>
    </source>
</reference>
<comment type="function">
    <text evidence="1">Extracellular aminopeptidase that allows assimilation of proteinaceous substrates and which contributes to pathogenicity.</text>
</comment>
<comment type="cofactor">
    <cofactor evidence="1">
        <name>Zn(2+)</name>
        <dbReference type="ChEBI" id="CHEBI:29105"/>
    </cofactor>
    <text evidence="1">Binds 2 Zn(2+) ions per subunit.</text>
</comment>
<comment type="subunit">
    <text evidence="1">Monomer.</text>
</comment>
<comment type="subcellular location">
    <subcellularLocation>
        <location evidence="1">Secreted</location>
    </subcellularLocation>
</comment>
<comment type="similarity">
    <text evidence="3">Belongs to the peptidase M28 family. M28E subfamily.</text>
</comment>
<comment type="sequence caution" evidence="3">
    <conflict type="erroneous gene model prediction">
        <sequence resource="EMBL-CDS" id="EAL84569"/>
    </conflict>
</comment>
<dbReference type="EC" id="3.4.11.-"/>
<dbReference type="EMBL" id="AAHF01000016">
    <property type="protein sequence ID" value="EAL84569.1"/>
    <property type="status" value="ALT_SEQ"/>
    <property type="molecule type" value="Genomic_DNA"/>
</dbReference>
<dbReference type="RefSeq" id="XP_746607.1">
    <property type="nucleotide sequence ID" value="XM_741514.1"/>
</dbReference>
<dbReference type="SMR" id="Q4W9P4"/>
<dbReference type="FunCoup" id="Q4W9P4">
    <property type="interactions" value="28"/>
</dbReference>
<dbReference type="STRING" id="330879.Q4W9P4"/>
<dbReference type="MEROPS" id="M28.022"/>
<dbReference type="GlyCosmos" id="Q4W9P4">
    <property type="glycosylation" value="3 sites, No reported glycans"/>
</dbReference>
<dbReference type="GeneID" id="3504012"/>
<dbReference type="KEGG" id="afm:AFUA_4G04210"/>
<dbReference type="VEuPathDB" id="FungiDB:Afu4g04210"/>
<dbReference type="eggNOG" id="KOG2195">
    <property type="taxonomic scope" value="Eukaryota"/>
</dbReference>
<dbReference type="HOGENOM" id="CLU_025866_1_1_1"/>
<dbReference type="InParanoid" id="Q4W9P4"/>
<dbReference type="OrthoDB" id="2214at2759"/>
<dbReference type="Proteomes" id="UP000002530">
    <property type="component" value="Chromosome 4"/>
</dbReference>
<dbReference type="GO" id="GO:0005576">
    <property type="term" value="C:extracellular region"/>
    <property type="evidence" value="ECO:0007669"/>
    <property type="project" value="UniProtKB-SubCell"/>
</dbReference>
<dbReference type="GO" id="GO:0004177">
    <property type="term" value="F:aminopeptidase activity"/>
    <property type="evidence" value="ECO:0007669"/>
    <property type="project" value="UniProtKB-KW"/>
</dbReference>
<dbReference type="GO" id="GO:0046872">
    <property type="term" value="F:metal ion binding"/>
    <property type="evidence" value="ECO:0007669"/>
    <property type="project" value="UniProtKB-KW"/>
</dbReference>
<dbReference type="GO" id="GO:0008235">
    <property type="term" value="F:metalloexopeptidase activity"/>
    <property type="evidence" value="ECO:0007669"/>
    <property type="project" value="InterPro"/>
</dbReference>
<dbReference type="GO" id="GO:0006508">
    <property type="term" value="P:proteolysis"/>
    <property type="evidence" value="ECO:0000318"/>
    <property type="project" value="GO_Central"/>
</dbReference>
<dbReference type="CDD" id="cd03879">
    <property type="entry name" value="M28_AAP"/>
    <property type="match status" value="1"/>
</dbReference>
<dbReference type="FunFam" id="3.40.630.10:FF:000042">
    <property type="entry name" value="Peptide hydrolase"/>
    <property type="match status" value="1"/>
</dbReference>
<dbReference type="Gene3D" id="3.40.630.10">
    <property type="entry name" value="Zn peptidases"/>
    <property type="match status" value="1"/>
</dbReference>
<dbReference type="InterPro" id="IPR045175">
    <property type="entry name" value="M28_fam"/>
</dbReference>
<dbReference type="InterPro" id="IPR007484">
    <property type="entry name" value="Peptidase_M28"/>
</dbReference>
<dbReference type="PANTHER" id="PTHR12147:SF56">
    <property type="entry name" value="AMINOPEPTIDASE YDR415C-RELATED"/>
    <property type="match status" value="1"/>
</dbReference>
<dbReference type="PANTHER" id="PTHR12147">
    <property type="entry name" value="METALLOPEPTIDASE M28 FAMILY MEMBER"/>
    <property type="match status" value="1"/>
</dbReference>
<dbReference type="Pfam" id="PF04389">
    <property type="entry name" value="Peptidase_M28"/>
    <property type="match status" value="1"/>
</dbReference>
<dbReference type="SUPFAM" id="SSF53187">
    <property type="entry name" value="Zn-dependent exopeptidases"/>
    <property type="match status" value="1"/>
</dbReference>
<organism>
    <name type="scientific">Aspergillus fumigatus (strain ATCC MYA-4609 / CBS 101355 / FGSC A1100 / Af293)</name>
    <name type="common">Neosartorya fumigata</name>
    <dbReference type="NCBI Taxonomy" id="330879"/>
    <lineage>
        <taxon>Eukaryota</taxon>
        <taxon>Fungi</taxon>
        <taxon>Dikarya</taxon>
        <taxon>Ascomycota</taxon>
        <taxon>Pezizomycotina</taxon>
        <taxon>Eurotiomycetes</taxon>
        <taxon>Eurotiomycetidae</taxon>
        <taxon>Eurotiales</taxon>
        <taxon>Aspergillaceae</taxon>
        <taxon>Aspergillus</taxon>
        <taxon>Aspergillus subgen. Fumigati</taxon>
    </lineage>
</organism>